<name>RL24_HELHP</name>
<proteinExistence type="inferred from homology"/>
<reference key="1">
    <citation type="journal article" date="2003" name="Proc. Natl. Acad. Sci. U.S.A.">
        <title>The complete genome sequence of the carcinogenic bacterium Helicobacter hepaticus.</title>
        <authorList>
            <person name="Suerbaum S."/>
            <person name="Josenhans C."/>
            <person name="Sterzenbach T."/>
            <person name="Drescher B."/>
            <person name="Brandt P."/>
            <person name="Bell M."/>
            <person name="Droege M."/>
            <person name="Fartmann B."/>
            <person name="Fischer H.-P."/>
            <person name="Ge Z."/>
            <person name="Hoerster A."/>
            <person name="Holland R."/>
            <person name="Klein K."/>
            <person name="Koenig J."/>
            <person name="Macko L."/>
            <person name="Mendz G.L."/>
            <person name="Nyakatura G."/>
            <person name="Schauer D.B."/>
            <person name="Shen Z."/>
            <person name="Weber J."/>
            <person name="Frosch M."/>
            <person name="Fox J.G."/>
        </authorList>
    </citation>
    <scope>NUCLEOTIDE SEQUENCE [LARGE SCALE GENOMIC DNA]</scope>
    <source>
        <strain>ATCC 51449 / 3B1</strain>
    </source>
</reference>
<feature type="chain" id="PRO_0000130663" description="Large ribosomal subunit protein uL24">
    <location>
        <begin position="1"/>
        <end position="78"/>
    </location>
</feature>
<comment type="function">
    <text evidence="1">One of two assembly initiator proteins, it binds directly to the 5'-end of the 23S rRNA, where it nucleates assembly of the 50S subunit.</text>
</comment>
<comment type="function">
    <text evidence="1">One of the proteins that surrounds the polypeptide exit tunnel on the outside of the subunit.</text>
</comment>
<comment type="subunit">
    <text evidence="1">Part of the 50S ribosomal subunit.</text>
</comment>
<comment type="similarity">
    <text evidence="1">Belongs to the universal ribosomal protein uL24 family.</text>
</comment>
<evidence type="ECO:0000255" key="1">
    <source>
        <dbReference type="HAMAP-Rule" id="MF_01326"/>
    </source>
</evidence>
<evidence type="ECO:0000305" key="2"/>
<dbReference type="EMBL" id="AE017125">
    <property type="protein sequence ID" value="AAP77986.1"/>
    <property type="molecule type" value="Genomic_DNA"/>
</dbReference>
<dbReference type="RefSeq" id="WP_011116229.1">
    <property type="nucleotide sequence ID" value="NC_004917.1"/>
</dbReference>
<dbReference type="SMR" id="Q7VGD3"/>
<dbReference type="STRING" id="235279.HH_1389"/>
<dbReference type="KEGG" id="hhe:HH_1389"/>
<dbReference type="eggNOG" id="COG0198">
    <property type="taxonomic scope" value="Bacteria"/>
</dbReference>
<dbReference type="HOGENOM" id="CLU_093315_3_0_7"/>
<dbReference type="OrthoDB" id="9807419at2"/>
<dbReference type="Proteomes" id="UP000002495">
    <property type="component" value="Chromosome"/>
</dbReference>
<dbReference type="GO" id="GO:1990904">
    <property type="term" value="C:ribonucleoprotein complex"/>
    <property type="evidence" value="ECO:0007669"/>
    <property type="project" value="UniProtKB-KW"/>
</dbReference>
<dbReference type="GO" id="GO:0005840">
    <property type="term" value="C:ribosome"/>
    <property type="evidence" value="ECO:0007669"/>
    <property type="project" value="UniProtKB-KW"/>
</dbReference>
<dbReference type="GO" id="GO:0019843">
    <property type="term" value="F:rRNA binding"/>
    <property type="evidence" value="ECO:0007669"/>
    <property type="project" value="UniProtKB-UniRule"/>
</dbReference>
<dbReference type="GO" id="GO:0003735">
    <property type="term" value="F:structural constituent of ribosome"/>
    <property type="evidence" value="ECO:0007669"/>
    <property type="project" value="InterPro"/>
</dbReference>
<dbReference type="GO" id="GO:0006412">
    <property type="term" value="P:translation"/>
    <property type="evidence" value="ECO:0007669"/>
    <property type="project" value="UniProtKB-UniRule"/>
</dbReference>
<dbReference type="CDD" id="cd06089">
    <property type="entry name" value="KOW_RPL26"/>
    <property type="match status" value="1"/>
</dbReference>
<dbReference type="Gene3D" id="2.30.30.30">
    <property type="match status" value="1"/>
</dbReference>
<dbReference type="HAMAP" id="MF_01326_B">
    <property type="entry name" value="Ribosomal_uL24_B"/>
    <property type="match status" value="1"/>
</dbReference>
<dbReference type="InterPro" id="IPR005824">
    <property type="entry name" value="KOW"/>
</dbReference>
<dbReference type="InterPro" id="IPR014722">
    <property type="entry name" value="Rib_uL2_dom2"/>
</dbReference>
<dbReference type="InterPro" id="IPR003256">
    <property type="entry name" value="Ribosomal_uL24"/>
</dbReference>
<dbReference type="InterPro" id="IPR005825">
    <property type="entry name" value="Ribosomal_uL24_CS"/>
</dbReference>
<dbReference type="InterPro" id="IPR041988">
    <property type="entry name" value="Ribosomal_uL24_KOW"/>
</dbReference>
<dbReference type="InterPro" id="IPR008991">
    <property type="entry name" value="Translation_prot_SH3-like_sf"/>
</dbReference>
<dbReference type="NCBIfam" id="TIGR01079">
    <property type="entry name" value="rplX_bact"/>
    <property type="match status" value="1"/>
</dbReference>
<dbReference type="PANTHER" id="PTHR12903">
    <property type="entry name" value="MITOCHONDRIAL RIBOSOMAL PROTEIN L24"/>
    <property type="match status" value="1"/>
</dbReference>
<dbReference type="Pfam" id="PF00467">
    <property type="entry name" value="KOW"/>
    <property type="match status" value="1"/>
</dbReference>
<dbReference type="Pfam" id="PF17136">
    <property type="entry name" value="ribosomal_L24"/>
    <property type="match status" value="1"/>
</dbReference>
<dbReference type="SMART" id="SM00739">
    <property type="entry name" value="KOW"/>
    <property type="match status" value="1"/>
</dbReference>
<dbReference type="SUPFAM" id="SSF50104">
    <property type="entry name" value="Translation proteins SH3-like domain"/>
    <property type="match status" value="1"/>
</dbReference>
<dbReference type="PROSITE" id="PS01108">
    <property type="entry name" value="RIBOSOMAL_L24"/>
    <property type="match status" value="1"/>
</dbReference>
<sequence>MAKFKIKKGDMVQVIAGDDKGKKAKVLQVLPKQAQVIVEGCKVVKKAIKVSEKNPKGGFVSKEMPMSISNVKKAEGDN</sequence>
<keyword id="KW-1185">Reference proteome</keyword>
<keyword id="KW-0687">Ribonucleoprotein</keyword>
<keyword id="KW-0689">Ribosomal protein</keyword>
<keyword id="KW-0694">RNA-binding</keyword>
<keyword id="KW-0699">rRNA-binding</keyword>
<gene>
    <name evidence="1" type="primary">rplX</name>
    <name type="ordered locus">HH_1389</name>
</gene>
<organism>
    <name type="scientific">Helicobacter hepaticus (strain ATCC 51449 / 3B1)</name>
    <dbReference type="NCBI Taxonomy" id="235279"/>
    <lineage>
        <taxon>Bacteria</taxon>
        <taxon>Pseudomonadati</taxon>
        <taxon>Campylobacterota</taxon>
        <taxon>Epsilonproteobacteria</taxon>
        <taxon>Campylobacterales</taxon>
        <taxon>Helicobacteraceae</taxon>
        <taxon>Helicobacter</taxon>
    </lineage>
</organism>
<protein>
    <recommendedName>
        <fullName evidence="1">Large ribosomal subunit protein uL24</fullName>
    </recommendedName>
    <alternativeName>
        <fullName evidence="2">50S ribosomal protein L24</fullName>
    </alternativeName>
</protein>
<accession>Q7VGD3</accession>